<comment type="similarity">
    <text evidence="1">Belongs to the bacterial ribosomal protein bL36 family.</text>
</comment>
<feature type="chain" id="PRO_0000126237" description="Large ribosomal subunit protein bL36">
    <location>
        <begin position="1"/>
        <end position="37"/>
    </location>
</feature>
<proteinExistence type="inferred from homology"/>
<protein>
    <recommendedName>
        <fullName evidence="1">Large ribosomal subunit protein bL36</fullName>
    </recommendedName>
    <alternativeName>
        <fullName evidence="2">50S ribosomal protein L36</fullName>
    </alternativeName>
</protein>
<gene>
    <name evidence="1" type="primary">rpmJ</name>
    <name type="synonym">rpl36</name>
    <name type="ordered locus">PMT_1752</name>
</gene>
<evidence type="ECO:0000255" key="1">
    <source>
        <dbReference type="HAMAP-Rule" id="MF_00251"/>
    </source>
</evidence>
<evidence type="ECO:0000305" key="2"/>
<dbReference type="EMBL" id="BX548175">
    <property type="protein sequence ID" value="CAE21927.1"/>
    <property type="molecule type" value="Genomic_DNA"/>
</dbReference>
<dbReference type="RefSeq" id="WP_011131119.1">
    <property type="nucleotide sequence ID" value="NC_005071.1"/>
</dbReference>
<dbReference type="SMR" id="Q7TUP2"/>
<dbReference type="KEGG" id="pmt:PMT_1752"/>
<dbReference type="eggNOG" id="COG0257">
    <property type="taxonomic scope" value="Bacteria"/>
</dbReference>
<dbReference type="HOGENOM" id="CLU_135723_6_2_3"/>
<dbReference type="OrthoDB" id="9802520at2"/>
<dbReference type="Proteomes" id="UP000001423">
    <property type="component" value="Chromosome"/>
</dbReference>
<dbReference type="GO" id="GO:0005737">
    <property type="term" value="C:cytoplasm"/>
    <property type="evidence" value="ECO:0007669"/>
    <property type="project" value="UniProtKB-ARBA"/>
</dbReference>
<dbReference type="GO" id="GO:1990904">
    <property type="term" value="C:ribonucleoprotein complex"/>
    <property type="evidence" value="ECO:0007669"/>
    <property type="project" value="UniProtKB-KW"/>
</dbReference>
<dbReference type="GO" id="GO:0005840">
    <property type="term" value="C:ribosome"/>
    <property type="evidence" value="ECO:0007669"/>
    <property type="project" value="UniProtKB-KW"/>
</dbReference>
<dbReference type="GO" id="GO:0003735">
    <property type="term" value="F:structural constituent of ribosome"/>
    <property type="evidence" value="ECO:0007669"/>
    <property type="project" value="InterPro"/>
</dbReference>
<dbReference type="GO" id="GO:0006412">
    <property type="term" value="P:translation"/>
    <property type="evidence" value="ECO:0007669"/>
    <property type="project" value="UniProtKB-UniRule"/>
</dbReference>
<dbReference type="HAMAP" id="MF_00251">
    <property type="entry name" value="Ribosomal_bL36"/>
    <property type="match status" value="1"/>
</dbReference>
<dbReference type="InterPro" id="IPR000473">
    <property type="entry name" value="Ribosomal_bL36"/>
</dbReference>
<dbReference type="InterPro" id="IPR035977">
    <property type="entry name" value="Ribosomal_bL36_sp"/>
</dbReference>
<dbReference type="NCBIfam" id="TIGR01022">
    <property type="entry name" value="rpmJ_bact"/>
    <property type="match status" value="1"/>
</dbReference>
<dbReference type="PANTHER" id="PTHR42888">
    <property type="entry name" value="50S RIBOSOMAL PROTEIN L36, CHLOROPLASTIC"/>
    <property type="match status" value="1"/>
</dbReference>
<dbReference type="PANTHER" id="PTHR42888:SF1">
    <property type="entry name" value="LARGE RIBOSOMAL SUBUNIT PROTEIN BL36C"/>
    <property type="match status" value="1"/>
</dbReference>
<dbReference type="Pfam" id="PF00444">
    <property type="entry name" value="Ribosomal_L36"/>
    <property type="match status" value="1"/>
</dbReference>
<dbReference type="SUPFAM" id="SSF57840">
    <property type="entry name" value="Ribosomal protein L36"/>
    <property type="match status" value="1"/>
</dbReference>
<dbReference type="PROSITE" id="PS00828">
    <property type="entry name" value="RIBOSOMAL_L36"/>
    <property type="match status" value="1"/>
</dbReference>
<accession>Q7TUP2</accession>
<reference key="1">
    <citation type="journal article" date="2003" name="Nature">
        <title>Genome divergence in two Prochlorococcus ecotypes reflects oceanic niche differentiation.</title>
        <authorList>
            <person name="Rocap G."/>
            <person name="Larimer F.W."/>
            <person name="Lamerdin J.E."/>
            <person name="Malfatti S."/>
            <person name="Chain P."/>
            <person name="Ahlgren N.A."/>
            <person name="Arellano A."/>
            <person name="Coleman M."/>
            <person name="Hauser L."/>
            <person name="Hess W.R."/>
            <person name="Johnson Z.I."/>
            <person name="Land M.L."/>
            <person name="Lindell D."/>
            <person name="Post A.F."/>
            <person name="Regala W."/>
            <person name="Shah M."/>
            <person name="Shaw S.L."/>
            <person name="Steglich C."/>
            <person name="Sullivan M.B."/>
            <person name="Ting C.S."/>
            <person name="Tolonen A."/>
            <person name="Webb E.A."/>
            <person name="Zinser E.R."/>
            <person name="Chisholm S.W."/>
        </authorList>
    </citation>
    <scope>NUCLEOTIDE SEQUENCE [LARGE SCALE GENOMIC DNA]</scope>
    <source>
        <strain>MIT 9313</strain>
    </source>
</reference>
<keyword id="KW-1185">Reference proteome</keyword>
<keyword id="KW-0687">Ribonucleoprotein</keyword>
<keyword id="KW-0689">Ribosomal protein</keyword>
<sequence>MKVRASVKKMCDKCRVIRRHGRVMVICSTPKHKQRQG</sequence>
<name>RL36_PROMM</name>
<organism>
    <name type="scientific">Prochlorococcus marinus (strain MIT 9313)</name>
    <dbReference type="NCBI Taxonomy" id="74547"/>
    <lineage>
        <taxon>Bacteria</taxon>
        <taxon>Bacillati</taxon>
        <taxon>Cyanobacteriota</taxon>
        <taxon>Cyanophyceae</taxon>
        <taxon>Synechococcales</taxon>
        <taxon>Prochlorococcaceae</taxon>
        <taxon>Prochlorococcus</taxon>
    </lineage>
</organism>